<reference key="1">
    <citation type="submission" date="2007-03" db="EMBL/GenBank/DDBJ databases">
        <title>Complete sequence of Desulfotomaculum reducens MI-1.</title>
        <authorList>
            <consortium name="US DOE Joint Genome Institute"/>
            <person name="Copeland A."/>
            <person name="Lucas S."/>
            <person name="Lapidus A."/>
            <person name="Barry K."/>
            <person name="Detter J.C."/>
            <person name="Glavina del Rio T."/>
            <person name="Hammon N."/>
            <person name="Israni S."/>
            <person name="Dalin E."/>
            <person name="Tice H."/>
            <person name="Pitluck S."/>
            <person name="Sims D."/>
            <person name="Brettin T."/>
            <person name="Bruce D."/>
            <person name="Han C."/>
            <person name="Tapia R."/>
            <person name="Schmutz J."/>
            <person name="Larimer F."/>
            <person name="Land M."/>
            <person name="Hauser L."/>
            <person name="Kyrpides N."/>
            <person name="Kim E."/>
            <person name="Tebo B.M."/>
            <person name="Richardson P."/>
        </authorList>
    </citation>
    <scope>NUCLEOTIDE SEQUENCE [LARGE SCALE GENOMIC DNA]</scope>
    <source>
        <strain>ATCC BAA-1160 / DSM 100696 / MI-1</strain>
    </source>
</reference>
<evidence type="ECO:0000255" key="1">
    <source>
        <dbReference type="HAMAP-Rule" id="MF_00368"/>
    </source>
</evidence>
<evidence type="ECO:0000305" key="2"/>
<name>RL7_DESRM</name>
<protein>
    <recommendedName>
        <fullName evidence="1">Large ribosomal subunit protein bL12</fullName>
    </recommendedName>
    <alternativeName>
        <fullName evidence="2">50S ribosomal protein L7/L12</fullName>
    </alternativeName>
</protein>
<comment type="function">
    <text evidence="1">Forms part of the ribosomal stalk which helps the ribosome interact with GTP-bound translation factors. Is thus essential for accurate translation.</text>
</comment>
<comment type="subunit">
    <text evidence="1">Homodimer. Part of the ribosomal stalk of the 50S ribosomal subunit. Forms a multimeric L10(L12)X complex, where L10 forms an elongated spine to which 2 to 4 L12 dimers bind in a sequential fashion. Binds GTP-bound translation factors.</text>
</comment>
<comment type="similarity">
    <text evidence="1">Belongs to the bacterial ribosomal protein bL12 family.</text>
</comment>
<keyword id="KW-1185">Reference proteome</keyword>
<keyword id="KW-0687">Ribonucleoprotein</keyword>
<keyword id="KW-0689">Ribosomal protein</keyword>
<sequence>MSKVAEVLEIVKGLTVLELAELVKAFEEEFGVSAAAPVAVAAAPAAGAAAAEEEKTEFDVILTSAGDKKINVIKVVREITGLGLKEAKELVDGAPKPVKEKIAKEEAESIKAKLTEAGATVDVK</sequence>
<proteinExistence type="inferred from homology"/>
<organism>
    <name type="scientific">Desulforamulus reducens (strain ATCC BAA-1160 / DSM 100696 / MI-1)</name>
    <name type="common">Desulfotomaculum reducens</name>
    <dbReference type="NCBI Taxonomy" id="349161"/>
    <lineage>
        <taxon>Bacteria</taxon>
        <taxon>Bacillati</taxon>
        <taxon>Bacillota</taxon>
        <taxon>Clostridia</taxon>
        <taxon>Eubacteriales</taxon>
        <taxon>Peptococcaceae</taxon>
        <taxon>Desulforamulus</taxon>
    </lineage>
</organism>
<feature type="chain" id="PRO_1000072113" description="Large ribosomal subunit protein bL12">
    <location>
        <begin position="1"/>
        <end position="124"/>
    </location>
</feature>
<dbReference type="EMBL" id="CP000612">
    <property type="protein sequence ID" value="ABO48755.1"/>
    <property type="molecule type" value="Genomic_DNA"/>
</dbReference>
<dbReference type="RefSeq" id="WP_011876596.1">
    <property type="nucleotide sequence ID" value="NC_009253.1"/>
</dbReference>
<dbReference type="SMR" id="A4J102"/>
<dbReference type="STRING" id="349161.Dred_0206"/>
<dbReference type="KEGG" id="drm:Dred_0206"/>
<dbReference type="eggNOG" id="COG0222">
    <property type="taxonomic scope" value="Bacteria"/>
</dbReference>
<dbReference type="HOGENOM" id="CLU_086499_3_2_9"/>
<dbReference type="OrthoDB" id="9811748at2"/>
<dbReference type="Proteomes" id="UP000001556">
    <property type="component" value="Chromosome"/>
</dbReference>
<dbReference type="GO" id="GO:0022625">
    <property type="term" value="C:cytosolic large ribosomal subunit"/>
    <property type="evidence" value="ECO:0007669"/>
    <property type="project" value="TreeGrafter"/>
</dbReference>
<dbReference type="GO" id="GO:0003729">
    <property type="term" value="F:mRNA binding"/>
    <property type="evidence" value="ECO:0007669"/>
    <property type="project" value="TreeGrafter"/>
</dbReference>
<dbReference type="GO" id="GO:0003735">
    <property type="term" value="F:structural constituent of ribosome"/>
    <property type="evidence" value="ECO:0007669"/>
    <property type="project" value="InterPro"/>
</dbReference>
<dbReference type="GO" id="GO:0006412">
    <property type="term" value="P:translation"/>
    <property type="evidence" value="ECO:0007669"/>
    <property type="project" value="UniProtKB-UniRule"/>
</dbReference>
<dbReference type="CDD" id="cd00387">
    <property type="entry name" value="Ribosomal_L7_L12"/>
    <property type="match status" value="1"/>
</dbReference>
<dbReference type="FunFam" id="3.30.1390.10:FF:000001">
    <property type="entry name" value="50S ribosomal protein L7/L12"/>
    <property type="match status" value="1"/>
</dbReference>
<dbReference type="Gene3D" id="3.30.1390.10">
    <property type="match status" value="1"/>
</dbReference>
<dbReference type="Gene3D" id="1.20.5.710">
    <property type="entry name" value="Single helix bin"/>
    <property type="match status" value="1"/>
</dbReference>
<dbReference type="HAMAP" id="MF_00368">
    <property type="entry name" value="Ribosomal_bL12"/>
    <property type="match status" value="1"/>
</dbReference>
<dbReference type="InterPro" id="IPR000206">
    <property type="entry name" value="Ribosomal_bL12"/>
</dbReference>
<dbReference type="InterPro" id="IPR013823">
    <property type="entry name" value="Ribosomal_bL12_C"/>
</dbReference>
<dbReference type="InterPro" id="IPR014719">
    <property type="entry name" value="Ribosomal_bL12_C/ClpS-like"/>
</dbReference>
<dbReference type="InterPro" id="IPR008932">
    <property type="entry name" value="Ribosomal_bL12_oligo"/>
</dbReference>
<dbReference type="InterPro" id="IPR036235">
    <property type="entry name" value="Ribosomal_bL12_oligo_N_sf"/>
</dbReference>
<dbReference type="NCBIfam" id="TIGR00855">
    <property type="entry name" value="L12"/>
    <property type="match status" value="1"/>
</dbReference>
<dbReference type="PANTHER" id="PTHR45987">
    <property type="entry name" value="39S RIBOSOMAL PROTEIN L12"/>
    <property type="match status" value="1"/>
</dbReference>
<dbReference type="PANTHER" id="PTHR45987:SF4">
    <property type="entry name" value="LARGE RIBOSOMAL SUBUNIT PROTEIN BL12M"/>
    <property type="match status" value="1"/>
</dbReference>
<dbReference type="Pfam" id="PF00542">
    <property type="entry name" value="Ribosomal_L12"/>
    <property type="match status" value="1"/>
</dbReference>
<dbReference type="Pfam" id="PF16320">
    <property type="entry name" value="Ribosomal_L12_N"/>
    <property type="match status" value="1"/>
</dbReference>
<dbReference type="SUPFAM" id="SSF54736">
    <property type="entry name" value="ClpS-like"/>
    <property type="match status" value="1"/>
</dbReference>
<dbReference type="SUPFAM" id="SSF48300">
    <property type="entry name" value="Ribosomal protein L7/12, oligomerisation (N-terminal) domain"/>
    <property type="match status" value="1"/>
</dbReference>
<accession>A4J102</accession>
<gene>
    <name evidence="1" type="primary">rplL</name>
    <name type="ordered locus">Dred_0206</name>
</gene>